<sequence>MEESWDFEFLSRMVDSLVSFLSEFVDDWLANDMRVAVFKILFSWLVVSLVAIHFAWKVYGNTVNDMYYRQGTGGQNGGTPDTHLSGWESAAGDAMKTHRE</sequence>
<reference key="1">
    <citation type="submission" date="2004-07" db="EMBL/GenBank/DDBJ databases">
        <authorList>
            <consortium name="NIH - Zebrafish Gene Collection (ZGC) project"/>
        </authorList>
    </citation>
    <scope>NUCLEOTIDE SEQUENCE [LARGE SCALE MRNA]</scope>
    <source>
        <tissue>Eye</tissue>
    </source>
</reference>
<evidence type="ECO:0000255" key="1"/>
<evidence type="ECO:0000256" key="2">
    <source>
        <dbReference type="SAM" id="MobiDB-lite"/>
    </source>
</evidence>
<evidence type="ECO:0000305" key="3"/>
<name>TCTA_DANRE</name>
<keyword id="KW-0472">Membrane</keyword>
<keyword id="KW-1185">Reference proteome</keyword>
<keyword id="KW-0812">Transmembrane</keyword>
<keyword id="KW-1133">Transmembrane helix</keyword>
<dbReference type="EMBL" id="BC076201">
    <property type="protein sequence ID" value="AAH76201.1"/>
    <property type="molecule type" value="mRNA"/>
</dbReference>
<dbReference type="RefSeq" id="NP_001002585.1">
    <property type="nucleotide sequence ID" value="NM_001002585.2"/>
</dbReference>
<dbReference type="SMR" id="Q6DGY3"/>
<dbReference type="FunCoup" id="Q6DGY3">
    <property type="interactions" value="1385"/>
</dbReference>
<dbReference type="STRING" id="7955.ENSDARP00000064887"/>
<dbReference type="PaxDb" id="7955-ENSDARP00000064887"/>
<dbReference type="Ensembl" id="ENSDART00000064888">
    <property type="protein sequence ID" value="ENSDARP00000064887"/>
    <property type="gene ID" value="ENSDARG00000044194"/>
</dbReference>
<dbReference type="GeneID" id="436858"/>
<dbReference type="KEGG" id="dre:436858"/>
<dbReference type="AGR" id="ZFIN:ZDB-GENE-040718-325"/>
<dbReference type="CTD" id="6988"/>
<dbReference type="ZFIN" id="ZDB-GENE-040718-325">
    <property type="gene designation" value="tcta"/>
</dbReference>
<dbReference type="eggNOG" id="ENOG502S6IC">
    <property type="taxonomic scope" value="Eukaryota"/>
</dbReference>
<dbReference type="HOGENOM" id="CLU_157357_0_0_1"/>
<dbReference type="InParanoid" id="Q6DGY3"/>
<dbReference type="OMA" id="SMWESTS"/>
<dbReference type="OrthoDB" id="9529463at2759"/>
<dbReference type="PhylomeDB" id="Q6DGY3"/>
<dbReference type="TreeFam" id="TF330748"/>
<dbReference type="PRO" id="PR:Q6DGY3"/>
<dbReference type="Proteomes" id="UP000000437">
    <property type="component" value="Chromosome 6"/>
</dbReference>
<dbReference type="Bgee" id="ENSDARG00000044194">
    <property type="expression patterns" value="Expressed in brain and 25 other cell types or tissues"/>
</dbReference>
<dbReference type="GO" id="GO:0016020">
    <property type="term" value="C:membrane"/>
    <property type="evidence" value="ECO:0007669"/>
    <property type="project" value="UniProtKB-SubCell"/>
</dbReference>
<dbReference type="GO" id="GO:0072675">
    <property type="term" value="P:osteoclast fusion"/>
    <property type="evidence" value="ECO:0000318"/>
    <property type="project" value="GO_Central"/>
</dbReference>
<dbReference type="InterPro" id="IPR016560">
    <property type="entry name" value="TCTA"/>
</dbReference>
<dbReference type="PANTHER" id="PTHR32267">
    <property type="entry name" value="T-CELL LEUKEMIA TRANSLOCATION-ALTERED GENE PROTEIN"/>
    <property type="match status" value="1"/>
</dbReference>
<dbReference type="PANTHER" id="PTHR32267:SF2">
    <property type="entry name" value="T-CELL LEUKEMIA TRANSLOCATION-ALTERED GENE PROTEIN"/>
    <property type="match status" value="1"/>
</dbReference>
<dbReference type="Pfam" id="PF15128">
    <property type="entry name" value="T_cell_tran_alt"/>
    <property type="match status" value="1"/>
</dbReference>
<dbReference type="PIRSF" id="PIRSF009935">
    <property type="entry name" value="TCTA"/>
    <property type="match status" value="1"/>
</dbReference>
<gene>
    <name type="primary">tcta</name>
    <name type="ORF">zgc:92721</name>
</gene>
<proteinExistence type="inferred from homology"/>
<comment type="subcellular location">
    <subcellularLocation>
        <location evidence="3">Membrane</location>
        <topology evidence="3">Single-pass membrane protein</topology>
    </subcellularLocation>
</comment>
<comment type="similarity">
    <text evidence="3">Belongs to the TCTA family.</text>
</comment>
<protein>
    <recommendedName>
        <fullName>T-cell leukemia translocation-altered gene protein homolog</fullName>
    </recommendedName>
</protein>
<organism>
    <name type="scientific">Danio rerio</name>
    <name type="common">Zebrafish</name>
    <name type="synonym">Brachydanio rerio</name>
    <dbReference type="NCBI Taxonomy" id="7955"/>
    <lineage>
        <taxon>Eukaryota</taxon>
        <taxon>Metazoa</taxon>
        <taxon>Chordata</taxon>
        <taxon>Craniata</taxon>
        <taxon>Vertebrata</taxon>
        <taxon>Euteleostomi</taxon>
        <taxon>Actinopterygii</taxon>
        <taxon>Neopterygii</taxon>
        <taxon>Teleostei</taxon>
        <taxon>Ostariophysi</taxon>
        <taxon>Cypriniformes</taxon>
        <taxon>Danionidae</taxon>
        <taxon>Danioninae</taxon>
        <taxon>Danio</taxon>
    </lineage>
</organism>
<accession>Q6DGY3</accession>
<feature type="chain" id="PRO_0000301682" description="T-cell leukemia translocation-altered gene protein homolog">
    <location>
        <begin position="1"/>
        <end position="100"/>
    </location>
</feature>
<feature type="transmembrane region" description="Helical" evidence="1">
    <location>
        <begin position="35"/>
        <end position="55"/>
    </location>
</feature>
<feature type="region of interest" description="Disordered" evidence="2">
    <location>
        <begin position="76"/>
        <end position="100"/>
    </location>
</feature>